<evidence type="ECO:0000255" key="1">
    <source>
        <dbReference type="HAMAP-Rule" id="MF_00414"/>
    </source>
</evidence>
<proteinExistence type="inferred from homology"/>
<dbReference type="EC" id="2.7.-.-" evidence="1"/>
<dbReference type="EMBL" id="CP000447">
    <property type="protein sequence ID" value="ABI70335.1"/>
    <property type="molecule type" value="Genomic_DNA"/>
</dbReference>
<dbReference type="RefSeq" id="WP_011635962.1">
    <property type="nucleotide sequence ID" value="NC_008345.1"/>
</dbReference>
<dbReference type="SMR" id="Q088I0"/>
<dbReference type="STRING" id="318167.Sfri_0473"/>
<dbReference type="KEGG" id="sfr:Sfri_0473"/>
<dbReference type="eggNOG" id="COG0661">
    <property type="taxonomic scope" value="Bacteria"/>
</dbReference>
<dbReference type="HOGENOM" id="CLU_006533_0_0_6"/>
<dbReference type="OrthoDB" id="9795390at2"/>
<dbReference type="UniPathway" id="UPA00232"/>
<dbReference type="Proteomes" id="UP000000684">
    <property type="component" value="Chromosome"/>
</dbReference>
<dbReference type="GO" id="GO:0005886">
    <property type="term" value="C:plasma membrane"/>
    <property type="evidence" value="ECO:0007669"/>
    <property type="project" value="UniProtKB-SubCell"/>
</dbReference>
<dbReference type="GO" id="GO:0005524">
    <property type="term" value="F:ATP binding"/>
    <property type="evidence" value="ECO:0007669"/>
    <property type="project" value="UniProtKB-KW"/>
</dbReference>
<dbReference type="GO" id="GO:0004672">
    <property type="term" value="F:protein kinase activity"/>
    <property type="evidence" value="ECO:0007669"/>
    <property type="project" value="UniProtKB-UniRule"/>
</dbReference>
<dbReference type="GO" id="GO:0010795">
    <property type="term" value="P:regulation of ubiquinone biosynthetic process"/>
    <property type="evidence" value="ECO:0007669"/>
    <property type="project" value="UniProtKB-UniRule"/>
</dbReference>
<dbReference type="GO" id="GO:0006744">
    <property type="term" value="P:ubiquinone biosynthetic process"/>
    <property type="evidence" value="ECO:0007669"/>
    <property type="project" value="UniProtKB-UniPathway"/>
</dbReference>
<dbReference type="CDD" id="cd13972">
    <property type="entry name" value="UbiB"/>
    <property type="match status" value="1"/>
</dbReference>
<dbReference type="HAMAP" id="MF_00414">
    <property type="entry name" value="UbiB"/>
    <property type="match status" value="1"/>
</dbReference>
<dbReference type="InterPro" id="IPR004147">
    <property type="entry name" value="ABC1_dom"/>
</dbReference>
<dbReference type="InterPro" id="IPR011009">
    <property type="entry name" value="Kinase-like_dom_sf"/>
</dbReference>
<dbReference type="InterPro" id="IPR010232">
    <property type="entry name" value="UbiB"/>
</dbReference>
<dbReference type="InterPro" id="IPR045308">
    <property type="entry name" value="UbiB_bact"/>
</dbReference>
<dbReference type="InterPro" id="IPR050154">
    <property type="entry name" value="UbiB_kinase"/>
</dbReference>
<dbReference type="NCBIfam" id="NF003404">
    <property type="entry name" value="PRK04750.1"/>
    <property type="match status" value="1"/>
</dbReference>
<dbReference type="NCBIfam" id="TIGR01982">
    <property type="entry name" value="UbiB"/>
    <property type="match status" value="1"/>
</dbReference>
<dbReference type="PANTHER" id="PTHR10566">
    <property type="entry name" value="CHAPERONE-ACTIVITY OF BC1 COMPLEX CABC1 -RELATED"/>
    <property type="match status" value="1"/>
</dbReference>
<dbReference type="PANTHER" id="PTHR10566:SF113">
    <property type="entry name" value="PROTEIN ACTIVITY OF BC1 COMPLEX KINASE 7, CHLOROPLASTIC"/>
    <property type="match status" value="1"/>
</dbReference>
<dbReference type="Pfam" id="PF03109">
    <property type="entry name" value="ABC1"/>
    <property type="match status" value="1"/>
</dbReference>
<dbReference type="SUPFAM" id="SSF56112">
    <property type="entry name" value="Protein kinase-like (PK-like)"/>
    <property type="match status" value="1"/>
</dbReference>
<reference key="1">
    <citation type="submission" date="2006-08" db="EMBL/GenBank/DDBJ databases">
        <title>Complete sequence of Shewanella frigidimarina NCIMB 400.</title>
        <authorList>
            <consortium name="US DOE Joint Genome Institute"/>
            <person name="Copeland A."/>
            <person name="Lucas S."/>
            <person name="Lapidus A."/>
            <person name="Barry K."/>
            <person name="Detter J.C."/>
            <person name="Glavina del Rio T."/>
            <person name="Hammon N."/>
            <person name="Israni S."/>
            <person name="Dalin E."/>
            <person name="Tice H."/>
            <person name="Pitluck S."/>
            <person name="Fredrickson J.K."/>
            <person name="Kolker E."/>
            <person name="McCuel L.A."/>
            <person name="DiChristina T."/>
            <person name="Nealson K.H."/>
            <person name="Newman D."/>
            <person name="Tiedje J.M."/>
            <person name="Zhou J."/>
            <person name="Romine M.F."/>
            <person name="Culley D.E."/>
            <person name="Serres M."/>
            <person name="Chertkov O."/>
            <person name="Brettin T."/>
            <person name="Bruce D."/>
            <person name="Han C."/>
            <person name="Tapia R."/>
            <person name="Gilna P."/>
            <person name="Schmutz J."/>
            <person name="Larimer F."/>
            <person name="Land M."/>
            <person name="Hauser L."/>
            <person name="Kyrpides N."/>
            <person name="Mikhailova N."/>
            <person name="Richardson P."/>
        </authorList>
    </citation>
    <scope>NUCLEOTIDE SEQUENCE [LARGE SCALE GENOMIC DNA]</scope>
    <source>
        <strain>NCIMB 400</strain>
    </source>
</reference>
<organism>
    <name type="scientific">Shewanella frigidimarina (strain NCIMB 400)</name>
    <dbReference type="NCBI Taxonomy" id="318167"/>
    <lineage>
        <taxon>Bacteria</taxon>
        <taxon>Pseudomonadati</taxon>
        <taxon>Pseudomonadota</taxon>
        <taxon>Gammaproteobacteria</taxon>
        <taxon>Alteromonadales</taxon>
        <taxon>Shewanellaceae</taxon>
        <taxon>Shewanella</taxon>
    </lineage>
</organism>
<protein>
    <recommendedName>
        <fullName evidence="1">Probable protein kinase UbiB</fullName>
        <ecNumber evidence="1">2.7.-.-</ecNumber>
    </recommendedName>
    <alternativeName>
        <fullName evidence="1">Ubiquinone biosynthesis protein UbiB</fullName>
    </alternativeName>
</protein>
<accession>Q088I0</accession>
<feature type="chain" id="PRO_1000123925" description="Probable protein kinase UbiB">
    <location>
        <begin position="1"/>
        <end position="549"/>
    </location>
</feature>
<feature type="transmembrane region" description="Helical" evidence="1">
    <location>
        <begin position="498"/>
        <end position="518"/>
    </location>
</feature>
<feature type="transmembrane region" description="Helical" evidence="1">
    <location>
        <begin position="519"/>
        <end position="539"/>
    </location>
</feature>
<feature type="domain" description="Protein kinase" evidence="1">
    <location>
        <begin position="123"/>
        <end position="501"/>
    </location>
</feature>
<feature type="active site" description="Proton acceptor" evidence="1">
    <location>
        <position position="287"/>
    </location>
</feature>
<feature type="binding site" evidence="1">
    <location>
        <begin position="129"/>
        <end position="137"/>
    </location>
    <ligand>
        <name>ATP</name>
        <dbReference type="ChEBI" id="CHEBI:30616"/>
    </ligand>
</feature>
<feature type="binding site" evidence="1">
    <location>
        <position position="152"/>
    </location>
    <ligand>
        <name>ATP</name>
        <dbReference type="ChEBI" id="CHEBI:30616"/>
    </ligand>
</feature>
<comment type="function">
    <text evidence="1">Is probably a protein kinase regulator of UbiI activity which is involved in aerobic coenzyme Q (ubiquinone) biosynthesis.</text>
</comment>
<comment type="pathway">
    <text>Cofactor biosynthesis; ubiquinone biosynthesis [regulation].</text>
</comment>
<comment type="subcellular location">
    <subcellularLocation>
        <location evidence="1">Cell inner membrane</location>
        <topology evidence="1">Multi-pass membrane protein</topology>
    </subcellularLocation>
</comment>
<comment type="similarity">
    <text evidence="1">Belongs to the ABC1 family. UbiB subfamily.</text>
</comment>
<keyword id="KW-0067">ATP-binding</keyword>
<keyword id="KW-0997">Cell inner membrane</keyword>
<keyword id="KW-1003">Cell membrane</keyword>
<keyword id="KW-0418">Kinase</keyword>
<keyword id="KW-0472">Membrane</keyword>
<keyword id="KW-0547">Nucleotide-binding</keyword>
<keyword id="KW-1185">Reference proteome</keyword>
<keyword id="KW-0808">Transferase</keyword>
<keyword id="KW-0812">Transmembrane</keyword>
<keyword id="KW-1133">Transmembrane helix</keyword>
<keyword id="KW-0831">Ubiquinone biosynthesis</keyword>
<name>UBIB_SHEFN</name>
<gene>
    <name evidence="1" type="primary">ubiB</name>
    <name type="ordered locus">Sfri_0473</name>
</gene>
<sequence length="549" mass="63252">MTTASIRRGYHVIKTILHFGLDDLIPKHKKPWYFAIVRNSLFWVRNKHKTKSPAERLKLAMQDLGPVYIKLGQMLSTRRDLLDDEWAYQLAMLQDRVPPFDSALAREAIEAELGAPIATYFDDFNDTPLASASISQVHTATLKSNGKAVVLKVLRPNVEQQILADLQLMTQTANLLETLLGDGNRLRPAEVIEDYRTTILGELNLKLEALNAIKLRNNFLGSNSLYVPFVYEEHSYQRLMVMERIYGIPVSDTEALRAQGTNFKLLAERGVELFFTQVFRDNFFHADMHPGNIFISREHPDDPFYIGLDCGIMGTLTEVDKRYLAENFLAFFNRDYHRIAQLYIESGWVSEHTDIIAFEQAVKVVCEPMFNKPLDEISFGHVLLELFRTARHFDIVVQPQLVLLEKTLLYIEGLGRQLYPQLDLWQTAKPFLENWMSEQVGPKAMFNKVKSNAPFWADKLPEFPELIYDNLKLGRKLLGTQQQMLDKYLRYQQKSHKSNYLLITSAVLLICGTILFTQIVTLWPAYTCIGAGILIWAIGWRSRPKNRKF</sequence>